<keyword id="KW-0025">Alternative splicing</keyword>
<keyword id="KW-0984">Congenital hypothyroidism</keyword>
<keyword id="KW-1015">Disulfide bond</keyword>
<keyword id="KW-0256">Endoplasmic reticulum</keyword>
<keyword id="KW-0325">Glycoprotein</keyword>
<keyword id="KW-0472">Membrane</keyword>
<keyword id="KW-0653">Protein transport</keyword>
<keyword id="KW-1267">Proteomics identification</keyword>
<keyword id="KW-1185">Reference proteome</keyword>
<keyword id="KW-0812">Transmembrane</keyword>
<keyword id="KW-1133">Transmembrane helix</keyword>
<keyword id="KW-0813">Transport</keyword>
<accession>Q1HG44</accession>
<accession>B2RPI9</accession>
<accession>H0YNQ6</accession>
<name>DOXA2_HUMAN</name>
<reference key="1">
    <citation type="journal article" date="2006" name="J. Biol. Chem.">
        <title>Identification of the maturation factor for dual oxidase. Evolution of an eukaryotic operon equivalent.</title>
        <authorList>
            <person name="Grasberger H."/>
            <person name="Refetoff S."/>
        </authorList>
    </citation>
    <scope>NUCLEOTIDE SEQUENCE [MRNA] (ISOFORM 1)</scope>
    <scope>FUNCTION</scope>
    <scope>TISSUE SPECIFICITY</scope>
    <scope>SUBCELLULAR LOCATION</scope>
    <scope>GLYCOSYLATION</scope>
    <scope>VARIANT GLY-100</scope>
    <source>
        <tissue>Thyroid</tissue>
    </source>
</reference>
<reference key="2">
    <citation type="journal article" date="2007" name="BMC Genomics">
        <title>The full-ORF clone resource of the German cDNA consortium.</title>
        <authorList>
            <person name="Bechtel S."/>
            <person name="Rosenfelder H."/>
            <person name="Duda A."/>
            <person name="Schmidt C.P."/>
            <person name="Ernst U."/>
            <person name="Wellenreuther R."/>
            <person name="Mehrle A."/>
            <person name="Schuster C."/>
            <person name="Bahr A."/>
            <person name="Bloecker H."/>
            <person name="Heubner D."/>
            <person name="Hoerlein A."/>
            <person name="Michel G."/>
            <person name="Wedler H."/>
            <person name="Koehrer K."/>
            <person name="Ottenwaelder B."/>
            <person name="Poustka A."/>
            <person name="Wiemann S."/>
            <person name="Schupp I."/>
        </authorList>
    </citation>
    <scope>NUCLEOTIDE SEQUENCE [LARGE SCALE MRNA] (ISOFORM 2)</scope>
</reference>
<reference key="3">
    <citation type="journal article" date="2006" name="Nature">
        <title>Analysis of the DNA sequence and duplication history of human chromosome 15.</title>
        <authorList>
            <person name="Zody M.C."/>
            <person name="Garber M."/>
            <person name="Sharpe T."/>
            <person name="Young S.K."/>
            <person name="Rowen L."/>
            <person name="O'Neill K."/>
            <person name="Whittaker C.A."/>
            <person name="Kamal M."/>
            <person name="Chang J.L."/>
            <person name="Cuomo C.A."/>
            <person name="Dewar K."/>
            <person name="FitzGerald M.G."/>
            <person name="Kodira C.D."/>
            <person name="Madan A."/>
            <person name="Qin S."/>
            <person name="Yang X."/>
            <person name="Abbasi N."/>
            <person name="Abouelleil A."/>
            <person name="Arachchi H.M."/>
            <person name="Baradarani L."/>
            <person name="Birditt B."/>
            <person name="Bloom S."/>
            <person name="Bloom T."/>
            <person name="Borowsky M.L."/>
            <person name="Burke J."/>
            <person name="Butler J."/>
            <person name="Cook A."/>
            <person name="DeArellano K."/>
            <person name="DeCaprio D."/>
            <person name="Dorris L. III"/>
            <person name="Dors M."/>
            <person name="Eichler E.E."/>
            <person name="Engels R."/>
            <person name="Fahey J."/>
            <person name="Fleetwood P."/>
            <person name="Friedman C."/>
            <person name="Gearin G."/>
            <person name="Hall J.L."/>
            <person name="Hensley G."/>
            <person name="Johnson E."/>
            <person name="Jones C."/>
            <person name="Kamat A."/>
            <person name="Kaur A."/>
            <person name="Locke D.P."/>
            <person name="Madan A."/>
            <person name="Munson G."/>
            <person name="Jaffe D.B."/>
            <person name="Lui A."/>
            <person name="Macdonald P."/>
            <person name="Mauceli E."/>
            <person name="Naylor J.W."/>
            <person name="Nesbitt R."/>
            <person name="Nicol R."/>
            <person name="O'Leary S.B."/>
            <person name="Ratcliffe A."/>
            <person name="Rounsley S."/>
            <person name="She X."/>
            <person name="Sneddon K.M.B."/>
            <person name="Stewart S."/>
            <person name="Sougnez C."/>
            <person name="Stone S.M."/>
            <person name="Topham K."/>
            <person name="Vincent D."/>
            <person name="Wang S."/>
            <person name="Zimmer A.R."/>
            <person name="Birren B.W."/>
            <person name="Hood L."/>
            <person name="Lander E.S."/>
            <person name="Nusbaum C."/>
        </authorList>
    </citation>
    <scope>NUCLEOTIDE SEQUENCE [LARGE SCALE GENOMIC DNA]</scope>
</reference>
<reference key="4">
    <citation type="submission" date="2005-07" db="EMBL/GenBank/DDBJ databases">
        <authorList>
            <person name="Mural R.J."/>
            <person name="Istrail S."/>
            <person name="Sutton G."/>
            <person name="Florea L."/>
            <person name="Halpern A.L."/>
            <person name="Mobarry C.M."/>
            <person name="Lippert R."/>
            <person name="Walenz B."/>
            <person name="Shatkay H."/>
            <person name="Dew I."/>
            <person name="Miller J.R."/>
            <person name="Flanigan M.J."/>
            <person name="Edwards N.J."/>
            <person name="Bolanos R."/>
            <person name="Fasulo D."/>
            <person name="Halldorsson B.V."/>
            <person name="Hannenhalli S."/>
            <person name="Turner R."/>
            <person name="Yooseph S."/>
            <person name="Lu F."/>
            <person name="Nusskern D.R."/>
            <person name="Shue B.C."/>
            <person name="Zheng X.H."/>
            <person name="Zhong F."/>
            <person name="Delcher A.L."/>
            <person name="Huson D.H."/>
            <person name="Kravitz S.A."/>
            <person name="Mouchard L."/>
            <person name="Reinert K."/>
            <person name="Remington K.A."/>
            <person name="Clark A.G."/>
            <person name="Waterman M.S."/>
            <person name="Eichler E.E."/>
            <person name="Adams M.D."/>
            <person name="Hunkapiller M.W."/>
            <person name="Myers E.W."/>
            <person name="Venter J.C."/>
        </authorList>
    </citation>
    <scope>NUCLEOTIDE SEQUENCE [LARGE SCALE GENOMIC DNA]</scope>
</reference>
<reference key="5">
    <citation type="journal article" date="2004" name="Genome Res.">
        <title>The status, quality, and expansion of the NIH full-length cDNA project: the Mammalian Gene Collection (MGC).</title>
        <authorList>
            <consortium name="The MGC Project Team"/>
        </authorList>
    </citation>
    <scope>NUCLEOTIDE SEQUENCE [LARGE SCALE MRNA] (ISOFORM 1)</scope>
</reference>
<reference key="6">
    <citation type="journal article" date="2008" name="J. Clin. Endocrinol. Metab.">
        <title>Biallelic inactivation of the dual oxidase maturation factor 2 (DUOXA2) gene as a novel cause of congenital hypothyroidism.</title>
        <authorList>
            <person name="Zamproni I."/>
            <person name="Grasberger H."/>
            <person name="Cortinovis F."/>
            <person name="Vigone M.C."/>
            <person name="Chiumello G."/>
            <person name="Mora S."/>
            <person name="Onigata K."/>
            <person name="Fugazzola L."/>
            <person name="Refetoff S."/>
            <person name="Persani L."/>
            <person name="Weber G."/>
        </authorList>
    </citation>
    <scope>INVOLVEMENT IN TDH5</scope>
</reference>
<reference key="7">
    <citation type="journal article" date="2015" name="Antioxid. Redox Signal.">
        <title>When an intramolecular disulfide bridge governs the interaction of DUOX2 with its partner DUOXA2.</title>
        <authorList>
            <person name="Carre A."/>
            <person name="Louzada R.A."/>
            <person name="Fortunato R.S."/>
            <person name="Ameziane-El-Hassani R."/>
            <person name="Morand S."/>
            <person name="Ogryzko V."/>
            <person name="de Carvalho D.P."/>
            <person name="Grasberger H."/>
            <person name="Leto T.L."/>
            <person name="Dupuy C."/>
        </authorList>
    </citation>
    <scope>SUBUNIT</scope>
    <scope>DISULFIDE BONDS</scope>
</reference>
<reference key="8">
    <citation type="journal article" date="2023" name="PLoS Genet.">
        <title>Casein kinase 1 gamma regulates oxidative stress response via interacting with the NADPH dual oxidase complex.</title>
        <authorList>
            <person name="Hu Y."/>
            <person name="Xu Z."/>
            <person name="Pan Q."/>
            <person name="Ma L."/>
        </authorList>
    </citation>
    <scope>INTERACTION WITH CSNK1G2</scope>
</reference>
<reference key="9">
    <citation type="journal article" date="2015" name="J. Clin. Endocrinol. Metab.">
        <title>A novel missense mutation (I26M) in DUOXA2 causing congenital goiter hypothyroidism impairs NADPH oxidase activity but not protein expression.</title>
        <authorList>
            <person name="Liu S."/>
            <person name="Liu L."/>
            <person name="Niu X."/>
            <person name="Lu D."/>
            <person name="Xia H."/>
            <person name="Yan S."/>
        </authorList>
    </citation>
    <scope>VARIANT TDH5 MET-26</scope>
    <scope>CHARACTERIZATION OF VARIANT TDH5 MET-26</scope>
</reference>
<feature type="chain" id="PRO_0000264245" description="Dual oxidase maturation factor 2">
    <location>
        <begin position="1"/>
        <end position="320"/>
    </location>
</feature>
<feature type="topological domain" description="Extracellular" evidence="1">
    <location>
        <begin position="1"/>
        <end position="21"/>
    </location>
</feature>
<feature type="transmembrane region" description="Helical" evidence="1">
    <location>
        <begin position="22"/>
        <end position="42"/>
    </location>
</feature>
<feature type="topological domain" description="Cytoplasmic" evidence="1">
    <location>
        <begin position="43"/>
        <end position="56"/>
    </location>
</feature>
<feature type="transmembrane region" description="Helical" evidence="1">
    <location>
        <begin position="57"/>
        <end position="77"/>
    </location>
</feature>
<feature type="topological domain" description="Extracellular" evidence="1">
    <location>
        <begin position="78"/>
        <end position="183"/>
    </location>
</feature>
<feature type="transmembrane region" description="Helical" evidence="1">
    <location>
        <begin position="184"/>
        <end position="204"/>
    </location>
</feature>
<feature type="topological domain" description="Cytoplasmic" evidence="1">
    <location>
        <begin position="205"/>
        <end position="206"/>
    </location>
</feature>
<feature type="transmembrane region" description="Helical" evidence="1">
    <location>
        <begin position="207"/>
        <end position="227"/>
    </location>
</feature>
<feature type="topological domain" description="Extracellular" evidence="1">
    <location>
        <begin position="228"/>
        <end position="247"/>
    </location>
</feature>
<feature type="transmembrane region" description="Helical" evidence="1">
    <location>
        <begin position="248"/>
        <end position="268"/>
    </location>
</feature>
<feature type="topological domain" description="Cytoplasmic" evidence="1">
    <location>
        <begin position="269"/>
        <end position="320"/>
    </location>
</feature>
<feature type="glycosylation site" description="N-linked (GlcNAc...) asparagine" evidence="1">
    <location>
        <position position="84"/>
    </location>
</feature>
<feature type="glycosylation site" description="N-linked (GlcNAc...) asparagine" evidence="1">
    <location>
        <position position="109"/>
    </location>
</feature>
<feature type="glycosylation site" description="N-linked (GlcNAc...) asparagine" evidence="1">
    <location>
        <position position="121"/>
    </location>
</feature>
<feature type="disulfide bond" description="Interchain (with C-568 in DUXA2)" evidence="5">
    <location>
        <position position="167"/>
    </location>
</feature>
<feature type="disulfide bond" description="Interchain (with C-582 in DUXA2)" evidence="5">
    <location>
        <position position="233"/>
    </location>
</feature>
<feature type="splice variant" id="VSP_046554" description="In isoform 2." evidence="7">
    <original>RWFWLVRVLLSLFIGAEIVAVHFSAEWFVGTVNTNTSYKAFSAARVTARVRLLVGLEGINITLTGTPVHQLN</original>
    <variation>EYLHSHLLPSEIRLGPPSSEGGDPCVPSTSGLTEPHQAVTGPGGRTRTRRQTARGVKVVEECQEVGVEGRCC</variation>
    <location>
        <begin position="50"/>
        <end position="121"/>
    </location>
</feature>
<feature type="splice variant" id="VSP_046555" description="In isoform 2." evidence="7">
    <location>
        <begin position="122"/>
        <end position="320"/>
    </location>
</feature>
<feature type="sequence variant" id="VAR_074025" description="In TDH5; uncertain significance; impairs hydrogen peroxide metabolic process." evidence="4">
    <original>I</original>
    <variation>M</variation>
    <location>
        <position position="26"/>
    </location>
</feature>
<feature type="sequence variant" id="VAR_047367" description="In dbSNP:rs2576090." evidence="2">
    <original>R</original>
    <variation>G</variation>
    <location>
        <position position="100"/>
    </location>
</feature>
<sequence>MTLWNGVLPFYPQPRHAAGFSVPLLIVILVFLALAASFLLILPGIRGHSRWFWLVRVLLSLFIGAEIVAVHFSAEWFVGTVNTNTSYKAFSAARVTARVRLLVGLEGINITLTGTPVHQLNETIDYNEQFTWRLKENYAAEYANALEKGLPDPVLYLAEKFTPSSPCGLYHQYHLAGHYASATLWVAFCFWLLSNVLLSTPAPLYGGLALLTTGAFALFGVFALASISSVPLCPLRLGSSALTTQYGAAFWVTLATGVLCLFLGGAVVSLQYVRPSALRTLLDQSAKDCSQERGGSPLILGDPLHKQAALPDLKCITTNL</sequence>
<gene>
    <name type="primary">DUOXA2</name>
</gene>
<protein>
    <recommendedName>
        <fullName>Dual oxidase maturation factor 2</fullName>
    </recommendedName>
    <alternativeName>
        <fullName>Dual oxidase activator 2</fullName>
    </alternativeName>
</protein>
<dbReference type="EMBL" id="DQ489734">
    <property type="protein sequence ID" value="ABF48256.1"/>
    <property type="molecule type" value="mRNA"/>
</dbReference>
<dbReference type="EMBL" id="BX537581">
    <property type="status" value="NOT_ANNOTATED_CDS"/>
    <property type="molecule type" value="mRNA"/>
</dbReference>
<dbReference type="EMBL" id="AC091117">
    <property type="status" value="NOT_ANNOTATED_CDS"/>
    <property type="molecule type" value="Genomic_DNA"/>
</dbReference>
<dbReference type="EMBL" id="CH471082">
    <property type="protein sequence ID" value="EAW77289.1"/>
    <property type="molecule type" value="Genomic_DNA"/>
</dbReference>
<dbReference type="EMBL" id="BC137465">
    <property type="protein sequence ID" value="AAI37466.1"/>
    <property type="molecule type" value="mRNA"/>
</dbReference>
<dbReference type="CCDS" id="CCDS10118.2">
    <molecule id="Q1HG44-1"/>
</dbReference>
<dbReference type="RefSeq" id="NP_997464.2">
    <molecule id="Q1HG44-1"/>
    <property type="nucleotide sequence ID" value="NM_207581.4"/>
</dbReference>
<dbReference type="SMR" id="Q1HG44"/>
<dbReference type="BioGRID" id="135714">
    <property type="interactions" value="63"/>
</dbReference>
<dbReference type="ComplexPortal" id="CPX-8182">
    <property type="entry name" value="DUOX2-DUOXA2 dual oxidase complex"/>
</dbReference>
<dbReference type="FunCoup" id="Q1HG44">
    <property type="interactions" value="47"/>
</dbReference>
<dbReference type="IntAct" id="Q1HG44">
    <property type="interactions" value="51"/>
</dbReference>
<dbReference type="STRING" id="9606.ENSP00000319705"/>
<dbReference type="GlyCosmos" id="Q1HG44">
    <property type="glycosylation" value="3 sites, No reported glycans"/>
</dbReference>
<dbReference type="GlyGen" id="Q1HG44">
    <property type="glycosylation" value="3 sites"/>
</dbReference>
<dbReference type="iPTMnet" id="Q1HG44"/>
<dbReference type="PhosphoSitePlus" id="Q1HG44"/>
<dbReference type="BioMuta" id="DUOXA2"/>
<dbReference type="DMDM" id="215274003"/>
<dbReference type="MassIVE" id="Q1HG44"/>
<dbReference type="PaxDb" id="9606-ENSP00000319705"/>
<dbReference type="PeptideAtlas" id="Q1HG44"/>
<dbReference type="ProteomicsDB" id="61216">
    <molecule id="Q1HG44-1"/>
</dbReference>
<dbReference type="Antibodypedia" id="2475">
    <property type="antibodies" value="94 antibodies from 17 providers"/>
</dbReference>
<dbReference type="DNASU" id="405753"/>
<dbReference type="Ensembl" id="ENST00000323030.6">
    <molecule id="Q1HG44-1"/>
    <property type="protein sequence ID" value="ENSP00000319705.5"/>
    <property type="gene ID" value="ENSG00000140274.14"/>
</dbReference>
<dbReference type="Ensembl" id="ENST00000491993.2">
    <molecule id="Q1HG44-2"/>
    <property type="protein sequence ID" value="ENSP00000454110.1"/>
    <property type="gene ID" value="ENSG00000140274.14"/>
</dbReference>
<dbReference type="GeneID" id="405753"/>
<dbReference type="KEGG" id="hsa:405753"/>
<dbReference type="MANE-Select" id="ENST00000323030.6">
    <property type="protein sequence ID" value="ENSP00000319705.5"/>
    <property type="RefSeq nucleotide sequence ID" value="NM_207581.4"/>
    <property type="RefSeq protein sequence ID" value="NP_997464.2"/>
</dbReference>
<dbReference type="UCSC" id="uc001zuo.4">
    <molecule id="Q1HG44-1"/>
    <property type="organism name" value="human"/>
</dbReference>
<dbReference type="AGR" id="HGNC:32698"/>
<dbReference type="CTD" id="405753"/>
<dbReference type="DisGeNET" id="405753"/>
<dbReference type="GeneCards" id="DUOXA2"/>
<dbReference type="HGNC" id="HGNC:32698">
    <property type="gene designation" value="DUOXA2"/>
</dbReference>
<dbReference type="HPA" id="ENSG00000140274">
    <property type="expression patterns" value="Tissue enhanced (gallbladder, urinary bladder)"/>
</dbReference>
<dbReference type="MalaCards" id="DUOXA2"/>
<dbReference type="MIM" id="274900">
    <property type="type" value="phenotype"/>
</dbReference>
<dbReference type="MIM" id="612772">
    <property type="type" value="gene"/>
</dbReference>
<dbReference type="neXtProt" id="NX_Q1HG44"/>
<dbReference type="OpenTargets" id="ENSG00000140274"/>
<dbReference type="Orphanet" id="95716">
    <property type="disease" value="Familial thyroid dyshormonogenesis"/>
</dbReference>
<dbReference type="PharmGKB" id="PA145008523"/>
<dbReference type="VEuPathDB" id="HostDB:ENSG00000140274"/>
<dbReference type="eggNOG" id="KOG3921">
    <property type="taxonomic scope" value="Eukaryota"/>
</dbReference>
<dbReference type="GeneTree" id="ENSGT00390000008240"/>
<dbReference type="HOGENOM" id="CLU_045258_0_0_1"/>
<dbReference type="InParanoid" id="Q1HG44"/>
<dbReference type="OMA" id="MHINITY"/>
<dbReference type="OrthoDB" id="10042652at2759"/>
<dbReference type="PAN-GO" id="Q1HG44">
    <property type="GO annotations" value="1 GO annotation based on evolutionary models"/>
</dbReference>
<dbReference type="PhylomeDB" id="Q1HG44"/>
<dbReference type="TreeFam" id="TF312996"/>
<dbReference type="PathwayCommons" id="Q1HG44"/>
<dbReference type="SignaLink" id="Q1HG44"/>
<dbReference type="BioGRID-ORCS" id="405753">
    <property type="hits" value="18 hits in 1142 CRISPR screens"/>
</dbReference>
<dbReference type="ChiTaRS" id="DUOXA2">
    <property type="organism name" value="human"/>
</dbReference>
<dbReference type="GenomeRNAi" id="405753"/>
<dbReference type="Pharos" id="Q1HG44">
    <property type="development level" value="Tbio"/>
</dbReference>
<dbReference type="PRO" id="PR:Q1HG44"/>
<dbReference type="Proteomes" id="UP000005640">
    <property type="component" value="Chromosome 15"/>
</dbReference>
<dbReference type="RNAct" id="Q1HG44">
    <property type="molecule type" value="protein"/>
</dbReference>
<dbReference type="Bgee" id="ENSG00000140274">
    <property type="expression patterns" value="Expressed in pancreatic ductal cell and 100 other cell types or tissues"/>
</dbReference>
<dbReference type="GO" id="GO:0045177">
    <property type="term" value="C:apical part of cell"/>
    <property type="evidence" value="ECO:0000314"/>
    <property type="project" value="UniProtKB"/>
</dbReference>
<dbReference type="GO" id="GO:0031252">
    <property type="term" value="C:cell leading edge"/>
    <property type="evidence" value="ECO:0000316"/>
    <property type="project" value="UniProtKB"/>
</dbReference>
<dbReference type="GO" id="GO:0005829">
    <property type="term" value="C:cytosol"/>
    <property type="evidence" value="ECO:0000314"/>
    <property type="project" value="UniProtKB"/>
</dbReference>
<dbReference type="GO" id="GO:0005783">
    <property type="term" value="C:endoplasmic reticulum"/>
    <property type="evidence" value="ECO:0000314"/>
    <property type="project" value="UniProtKB"/>
</dbReference>
<dbReference type="GO" id="GO:0005789">
    <property type="term" value="C:endoplasmic reticulum membrane"/>
    <property type="evidence" value="ECO:0007669"/>
    <property type="project" value="UniProtKB-SubCell"/>
</dbReference>
<dbReference type="GO" id="GO:0016020">
    <property type="term" value="C:membrane"/>
    <property type="evidence" value="ECO:0000318"/>
    <property type="project" value="GO_Central"/>
</dbReference>
<dbReference type="GO" id="GO:0005886">
    <property type="term" value="C:plasma membrane"/>
    <property type="evidence" value="ECO:0000314"/>
    <property type="project" value="UniProtKB"/>
</dbReference>
<dbReference type="GO" id="GO:0019899">
    <property type="term" value="F:enzyme binding"/>
    <property type="evidence" value="ECO:0000353"/>
    <property type="project" value="UniProtKB"/>
</dbReference>
<dbReference type="GO" id="GO:0042743">
    <property type="term" value="P:hydrogen peroxide metabolic process"/>
    <property type="evidence" value="ECO:0007669"/>
    <property type="project" value="Ensembl"/>
</dbReference>
<dbReference type="GO" id="GO:2000147">
    <property type="term" value="P:positive regulation of cell motility"/>
    <property type="evidence" value="ECO:0000314"/>
    <property type="project" value="UniProtKB"/>
</dbReference>
<dbReference type="GO" id="GO:0010729">
    <property type="term" value="P:positive regulation of hydrogen peroxide biosynthetic process"/>
    <property type="evidence" value="ECO:0000314"/>
    <property type="project" value="UniProtKB"/>
</dbReference>
<dbReference type="GO" id="GO:0008104">
    <property type="term" value="P:protein localization"/>
    <property type="evidence" value="ECO:0000316"/>
    <property type="project" value="UniProtKB"/>
</dbReference>
<dbReference type="GO" id="GO:0051604">
    <property type="term" value="P:protein maturation"/>
    <property type="evidence" value="ECO:0000316"/>
    <property type="project" value="UniProtKB"/>
</dbReference>
<dbReference type="GO" id="GO:0015031">
    <property type="term" value="P:protein transport"/>
    <property type="evidence" value="ECO:0007669"/>
    <property type="project" value="UniProtKB-KW"/>
</dbReference>
<dbReference type="GO" id="GO:0050727">
    <property type="term" value="P:regulation of inflammatory response"/>
    <property type="evidence" value="ECO:0007669"/>
    <property type="project" value="Ensembl"/>
</dbReference>
<dbReference type="GO" id="GO:2000609">
    <property type="term" value="P:regulation of thyroid hormone generation"/>
    <property type="evidence" value="ECO:0007669"/>
    <property type="project" value="Ensembl"/>
</dbReference>
<dbReference type="InterPro" id="IPR018469">
    <property type="entry name" value="Dual_oxidase_maturation_fac"/>
</dbReference>
<dbReference type="PANTHER" id="PTHR31158">
    <property type="entry name" value="DUAL OXIDASE 2"/>
    <property type="match status" value="1"/>
</dbReference>
<dbReference type="PANTHER" id="PTHR31158:SF2">
    <property type="entry name" value="DUAL OXIDASE MATURATION FACTOR 2"/>
    <property type="match status" value="1"/>
</dbReference>
<dbReference type="Pfam" id="PF10204">
    <property type="entry name" value="DuoxA"/>
    <property type="match status" value="1"/>
</dbReference>
<comment type="function">
    <text evidence="2">Required for the maturation and the transport from the endoplasmic reticulum to the plasma membrane of functional DUOX2. May play a role in thyroid hormone synthesis.</text>
</comment>
<comment type="subunit">
    <text evidence="5 6">Heterodimer with DUXA2; disulfide-linked (PubMed:25761904). Interacts with CSNK1G2 (PubMed:37099597).</text>
</comment>
<comment type="interaction">
    <interactant intactId="EBI-25589731">
        <id>Q1HG44</id>
    </interactant>
    <interactant intactId="EBI-12740885">
        <id>Q9NRD8</id>
        <label>DUOX2</label>
    </interactant>
    <organismsDiffer>false</organismsDiffer>
    <experiments>5</experiments>
</comment>
<comment type="subcellular location">
    <subcellularLocation>
        <location evidence="2">Endoplasmic reticulum membrane</location>
        <topology evidence="2">Multi-pass membrane protein</topology>
    </subcellularLocation>
</comment>
<comment type="alternative products">
    <event type="alternative splicing"/>
    <isoform>
        <id>Q1HG44-1</id>
        <name>1</name>
        <sequence type="displayed"/>
    </isoform>
    <isoform>
        <id>Q1HG44-2</id>
        <name>2</name>
        <sequence type="described" ref="VSP_046554 VSP_046555"/>
    </isoform>
</comment>
<comment type="tissue specificity">
    <text evidence="2">Specifically expressed in thyroid. Also detected in salivary glands.</text>
</comment>
<comment type="PTM">
    <text evidence="2">N-glycosylated.</text>
</comment>
<comment type="disease" evidence="3 4">
    <disease id="DI-02527">
        <name>Thyroid dyshormonogenesis 5</name>
        <acronym>TDH5</acronym>
        <description>A disorder due to thyroid dyshormonogenesis, causing hypothyroidism, goiter, and variable mental deficits derived from unrecognized and untreated hypothyroidism.</description>
        <dbReference type="MIM" id="274900"/>
    </disease>
    <text>The disease is caused by variants affecting the gene represented in this entry.</text>
</comment>
<comment type="similarity">
    <text evidence="8">Belongs to the DUOXA family.</text>
</comment>
<organism>
    <name type="scientific">Homo sapiens</name>
    <name type="common">Human</name>
    <dbReference type="NCBI Taxonomy" id="9606"/>
    <lineage>
        <taxon>Eukaryota</taxon>
        <taxon>Metazoa</taxon>
        <taxon>Chordata</taxon>
        <taxon>Craniata</taxon>
        <taxon>Vertebrata</taxon>
        <taxon>Euteleostomi</taxon>
        <taxon>Mammalia</taxon>
        <taxon>Eutheria</taxon>
        <taxon>Euarchontoglires</taxon>
        <taxon>Primates</taxon>
        <taxon>Haplorrhini</taxon>
        <taxon>Catarrhini</taxon>
        <taxon>Hominidae</taxon>
        <taxon>Homo</taxon>
    </lineage>
</organism>
<proteinExistence type="evidence at protein level"/>
<evidence type="ECO:0000255" key="1"/>
<evidence type="ECO:0000269" key="2">
    <source>
    </source>
</evidence>
<evidence type="ECO:0000269" key="3">
    <source>
    </source>
</evidence>
<evidence type="ECO:0000269" key="4">
    <source>
    </source>
</evidence>
<evidence type="ECO:0000269" key="5">
    <source>
    </source>
</evidence>
<evidence type="ECO:0000269" key="6">
    <source>
    </source>
</evidence>
<evidence type="ECO:0000303" key="7">
    <source>
    </source>
</evidence>
<evidence type="ECO:0000305" key="8"/>